<proteinExistence type="inferred from homology"/>
<evidence type="ECO:0000250" key="1">
    <source>
        <dbReference type="UniProtKB" id="P47118"/>
    </source>
</evidence>
<evidence type="ECO:0000250" key="2">
    <source>
        <dbReference type="UniProtKB" id="Q9NRH1"/>
    </source>
</evidence>
<evidence type="ECO:0000305" key="3"/>
<dbReference type="EMBL" id="AE016819">
    <property type="protein sequence ID" value="AAS53792.2"/>
    <property type="molecule type" value="Genomic_DNA"/>
</dbReference>
<dbReference type="RefSeq" id="NP_985968.2">
    <property type="nucleotide sequence ID" value="NM_211323.2"/>
</dbReference>
<dbReference type="FunCoup" id="Q753A3">
    <property type="interactions" value="9"/>
</dbReference>
<dbReference type="STRING" id="284811.Q753A3"/>
<dbReference type="EnsemblFungi" id="AAS53792">
    <property type="protein sequence ID" value="AAS53792"/>
    <property type="gene ID" value="AGOS_AFR421C"/>
</dbReference>
<dbReference type="GeneID" id="4622241"/>
<dbReference type="KEGG" id="ago:AGOS_AFR421C"/>
<dbReference type="eggNOG" id="KOG4774">
    <property type="taxonomic scope" value="Eukaryota"/>
</dbReference>
<dbReference type="HOGENOM" id="CLU_066684_2_0_1"/>
<dbReference type="InParanoid" id="Q753A3"/>
<dbReference type="OMA" id="CKNNEAP"/>
<dbReference type="OrthoDB" id="20086at2759"/>
<dbReference type="Proteomes" id="UP000000591">
    <property type="component" value="Chromosome VI"/>
</dbReference>
<dbReference type="GO" id="GO:0097361">
    <property type="term" value="C:cytosolic [4Fe-4S] assembly targeting complex"/>
    <property type="evidence" value="ECO:0007669"/>
    <property type="project" value="EnsemblFungi"/>
</dbReference>
<dbReference type="GO" id="GO:0005634">
    <property type="term" value="C:nucleus"/>
    <property type="evidence" value="ECO:0007669"/>
    <property type="project" value="UniProtKB-SubCell"/>
</dbReference>
<dbReference type="GO" id="GO:0062092">
    <property type="term" value="C:Yae1-Lto1 complex"/>
    <property type="evidence" value="ECO:0007669"/>
    <property type="project" value="EnsemblFungi"/>
</dbReference>
<dbReference type="GO" id="GO:0030674">
    <property type="term" value="F:protein-macromolecule adaptor activity"/>
    <property type="evidence" value="ECO:0007669"/>
    <property type="project" value="EnsemblFungi"/>
</dbReference>
<dbReference type="GO" id="GO:0051604">
    <property type="term" value="P:protein maturation"/>
    <property type="evidence" value="ECO:0000250"/>
    <property type="project" value="UniProtKB"/>
</dbReference>
<dbReference type="InterPro" id="IPR019191">
    <property type="entry name" value="Essential_protein_Yae1_N"/>
</dbReference>
<dbReference type="InterPro" id="IPR038881">
    <property type="entry name" value="Yae1-like"/>
</dbReference>
<dbReference type="PANTHER" id="PTHR18829">
    <property type="entry name" value="PROTEIN YAE1 HOMOLOG"/>
    <property type="match status" value="1"/>
</dbReference>
<dbReference type="PANTHER" id="PTHR18829:SF0">
    <property type="entry name" value="PROTEIN YAE1 HOMOLOG"/>
    <property type="match status" value="1"/>
</dbReference>
<dbReference type="Pfam" id="PF09811">
    <property type="entry name" value="Yae1_N"/>
    <property type="match status" value="1"/>
</dbReference>
<organism>
    <name type="scientific">Eremothecium gossypii (strain ATCC 10895 / CBS 109.51 / FGSC 9923 / NRRL Y-1056)</name>
    <name type="common">Yeast</name>
    <name type="synonym">Ashbya gossypii</name>
    <dbReference type="NCBI Taxonomy" id="284811"/>
    <lineage>
        <taxon>Eukaryota</taxon>
        <taxon>Fungi</taxon>
        <taxon>Dikarya</taxon>
        <taxon>Ascomycota</taxon>
        <taxon>Saccharomycotina</taxon>
        <taxon>Saccharomycetes</taxon>
        <taxon>Saccharomycetales</taxon>
        <taxon>Saccharomycetaceae</taxon>
        <taxon>Eremothecium</taxon>
    </lineage>
</organism>
<sequence>MSCEDDWLNTSDDEEKHGVFGGGSLELQKLERTHRNRGYRDGISSAKEENLQEGFDMKFPEGSRLGFQVGEVIGKLQTLDSLFGAQDSELRSDYKEALAQLQISRVLTHANFSEQMDATEALSSLLARWEGALVKYTSRYIPNV</sequence>
<keyword id="KW-0963">Cytoplasm</keyword>
<keyword id="KW-0539">Nucleus</keyword>
<keyword id="KW-1185">Reference proteome</keyword>
<accession>Q753A3</accession>
<gene>
    <name type="primary">YAE1</name>
    <name type="ordered locus">AFR421C</name>
</gene>
<protein>
    <recommendedName>
        <fullName>Protein YAE1</fullName>
    </recommendedName>
</protein>
<reference key="1">
    <citation type="journal article" date="2004" name="Science">
        <title>The Ashbya gossypii genome as a tool for mapping the ancient Saccharomyces cerevisiae genome.</title>
        <authorList>
            <person name="Dietrich F.S."/>
            <person name="Voegeli S."/>
            <person name="Brachat S."/>
            <person name="Lerch A."/>
            <person name="Gates K."/>
            <person name="Steiner S."/>
            <person name="Mohr C."/>
            <person name="Poehlmann R."/>
            <person name="Luedi P."/>
            <person name="Choi S."/>
            <person name="Wing R.A."/>
            <person name="Flavier A."/>
            <person name="Gaffney T.D."/>
            <person name="Philippsen P."/>
        </authorList>
    </citation>
    <scope>NUCLEOTIDE SEQUENCE [LARGE SCALE GENOMIC DNA]</scope>
    <source>
        <strain>ATCC 10895 / CBS 109.51 / FGSC 9923 / NRRL Y-1056</strain>
    </source>
</reference>
<reference key="2">
    <citation type="journal article" date="2013" name="G3 (Bethesda)">
        <title>Genomes of Ashbya fungi isolated from insects reveal four mating-type loci, numerous translocations, lack of transposons, and distinct gene duplications.</title>
        <authorList>
            <person name="Dietrich F.S."/>
            <person name="Voegeli S."/>
            <person name="Kuo S."/>
            <person name="Philippsen P."/>
        </authorList>
    </citation>
    <scope>GENOME REANNOTATION</scope>
    <source>
        <strain>ATCC 10895 / CBS 109.51 / FGSC 9923 / NRRL Y-1056</strain>
    </source>
</reference>
<comment type="function">
    <text evidence="2">The complex LTO1:YAE1 may function as a target specific adapter that probably recruits apo-RPLI1 to the cytosolic iron-sulfur protein assembly (CIA) complex machinery. May be required for biogenesis of the large ribosomal subunit and initiation of translation.</text>
</comment>
<comment type="subunit">
    <text evidence="2">May form a complex with LTO1.</text>
</comment>
<comment type="subcellular location">
    <subcellularLocation>
        <location evidence="1">Cytoplasm</location>
    </subcellularLocation>
    <subcellularLocation>
        <location evidence="1">Nucleus</location>
    </subcellularLocation>
</comment>
<comment type="similarity">
    <text evidence="3">Belongs to the YAE1 family.</text>
</comment>
<feature type="chain" id="PRO_0000324417" description="Protein YAE1">
    <location>
        <begin position="1"/>
        <end position="144"/>
    </location>
</feature>
<feature type="region of interest" description="deca-GX3 motif; required for interaction with LTO1" evidence="1">
    <location>
        <begin position="38"/>
        <end position="78"/>
    </location>
</feature>
<name>YAE1_EREGS</name>